<protein>
    <recommendedName>
        <fullName evidence="4">Esculentin-2MT1</fullName>
    </recommendedName>
</protein>
<proteinExistence type="evidence at protein level"/>
<accession>E1AXF6</accession>
<organism evidence="6">
    <name type="scientific">Amolops mantzorum</name>
    <name type="common">Sichuan torrent frog</name>
    <dbReference type="NCBI Taxonomy" id="167930"/>
    <lineage>
        <taxon>Eukaryota</taxon>
        <taxon>Metazoa</taxon>
        <taxon>Chordata</taxon>
        <taxon>Craniata</taxon>
        <taxon>Vertebrata</taxon>
        <taxon>Euteleostomi</taxon>
        <taxon>Amphibia</taxon>
        <taxon>Batrachia</taxon>
        <taxon>Anura</taxon>
        <taxon>Neobatrachia</taxon>
        <taxon>Ranoidea</taxon>
        <taxon>Ranidae</taxon>
        <taxon>Amolops</taxon>
    </lineage>
</organism>
<sequence>MFTMKKPLLLLFFLGTISLSLCEEERNADEDDGEKEVKRGIFALIKTAAKFVGKNLLKQAGKAGLEHLACKANNQC</sequence>
<name>E2MT1_AMOMA</name>
<feature type="signal peptide" evidence="2">
    <location>
        <begin position="1"/>
        <end position="22"/>
    </location>
</feature>
<feature type="propeptide" id="PRO_0000440080" evidence="5">
    <location>
        <begin position="23"/>
        <end position="37"/>
    </location>
</feature>
<feature type="peptide" id="PRO_0000440081" description="Esculentin-2MT1" evidence="3">
    <location>
        <begin position="40"/>
        <end position="76"/>
    </location>
</feature>
<feature type="disulfide bond" evidence="3">
    <location>
        <begin position="70"/>
        <end position="76"/>
    </location>
</feature>
<comment type="function">
    <text evidence="1">Antimicrobial peptide.</text>
</comment>
<comment type="subcellular location">
    <subcellularLocation>
        <location evidence="2 3">Secreted</location>
    </subcellularLocation>
</comment>
<comment type="tissue specificity">
    <text evidence="5">Expressed by the skin glands.</text>
</comment>
<comment type="similarity">
    <text evidence="2">Belongs to the frog skin active peptide (FSAP) family. Esculentin subfamily.</text>
</comment>
<comment type="online information" name="The antimicrobial peptide database">
    <link uri="https://wangapd3.com/database/query_output.php?ID=01929"/>
</comment>
<reference evidence="6" key="1">
    <citation type="journal article" date="2014" name="Zool. Sci.">
        <title>Peptidomic analysis of antimicrobial peptides in skin secretions of Amolops mantzorum.</title>
        <authorList>
            <person name="Hu Y."/>
            <person name="Yu Z."/>
            <person name="Xu S."/>
            <person name="Hu Y."/>
            <person name="Guo C."/>
            <person name="Li F."/>
            <person name="Li J."/>
            <person name="Liu J."/>
            <person name="Wang H."/>
        </authorList>
    </citation>
    <scope>NUCLEOTIDE SEQUENCE [MRNA]</scope>
    <scope>PROTEIN SEQUENCE OF 40-76</scope>
    <scope>SUBCELLULAR LOCATION</scope>
    <scope>DISULFIDE BOND</scope>
    <scope>IDENTIFICATION BY MASS SPECTROMETRY</scope>
    <source>
        <tissue evidence="4">Skin</tissue>
        <tissue evidence="4">Skin secretion</tissue>
    </source>
</reference>
<evidence type="ECO:0000250" key="1">
    <source>
        <dbReference type="UniProtKB" id="E1B242"/>
    </source>
</evidence>
<evidence type="ECO:0000255" key="2"/>
<evidence type="ECO:0000269" key="3">
    <source>
    </source>
</evidence>
<evidence type="ECO:0000303" key="4">
    <source>
    </source>
</evidence>
<evidence type="ECO:0000305" key="5">
    <source>
    </source>
</evidence>
<evidence type="ECO:0000312" key="6">
    <source>
        <dbReference type="EMBL" id="ADM34240.1"/>
    </source>
</evidence>
<keyword id="KW-0878">Amphibian defense peptide</keyword>
<keyword id="KW-0929">Antimicrobial</keyword>
<keyword id="KW-0165">Cleavage on pair of basic residues</keyword>
<keyword id="KW-0903">Direct protein sequencing</keyword>
<keyword id="KW-1015">Disulfide bond</keyword>
<keyword id="KW-0964">Secreted</keyword>
<keyword id="KW-0732">Signal</keyword>
<dbReference type="EMBL" id="HQ026141">
    <property type="protein sequence ID" value="ADM34240.1"/>
    <property type="molecule type" value="mRNA"/>
</dbReference>
<dbReference type="SMR" id="E1AXF6"/>
<dbReference type="GO" id="GO:0005576">
    <property type="term" value="C:extracellular region"/>
    <property type="evidence" value="ECO:0007669"/>
    <property type="project" value="UniProtKB-SubCell"/>
</dbReference>
<dbReference type="GO" id="GO:0006952">
    <property type="term" value="P:defense response"/>
    <property type="evidence" value="ECO:0007669"/>
    <property type="project" value="UniProtKB-KW"/>
</dbReference>
<dbReference type="InterPro" id="IPR004275">
    <property type="entry name" value="Frog_antimicrobial_propeptide"/>
</dbReference>
<dbReference type="Pfam" id="PF03032">
    <property type="entry name" value="FSAP_sig_propep"/>
    <property type="match status" value="1"/>
</dbReference>